<keyword id="KW-1235">Degradation of host cell envelope components during virus entry</keyword>
<keyword id="KW-1237">Degradation of host lipopolysaccharides during virus entry</keyword>
<keyword id="KW-0326">Glycosidase</keyword>
<keyword id="KW-0945">Host-virus interaction</keyword>
<keyword id="KW-0378">Hydrolase</keyword>
<keyword id="KW-0426">Late protein</keyword>
<keyword id="KW-1185">Reference proteome</keyword>
<keyword id="KW-1233">Viral attachment to host adhesion receptor</keyword>
<keyword id="KW-1161">Viral attachment to host cell</keyword>
<keyword id="KW-1230">Viral tail fiber protein</keyword>
<keyword id="KW-1227">Viral tail protein</keyword>
<keyword id="KW-0946">Virion</keyword>
<keyword id="KW-1160">Virus entry into host cell</keyword>
<comment type="function">
    <text evidence="1 2 3">Structural component of the short non-contractile tail (PubMed:16452981). The tail comprises six spikes that mediate primary attachment to the host cell lipopolysaccharides (LPS) and display endorhamnosidase enzymatic activity, hydrolyzing the linkage between rhamnose and galactose of the O-antigen polysaccharide. Digestion of the LPS brings the capsid near the cell outer membrane (PubMed:20709082, PubMed:4633001).</text>
</comment>
<comment type="subcellular location">
    <subcellularLocation>
        <location evidence="1">Virion</location>
    </subcellularLocation>
</comment>
<protein>
    <recommendedName>
        <fullName evidence="4">Tail spike protein</fullName>
        <shortName>TSP</shortName>
    </recommendedName>
    <alternativeName>
        <fullName evidence="4">Endorhamnosidase</fullName>
        <ecNumber>3.2.1.-</ecNumber>
    </alternativeName>
    <alternativeName>
        <fullName evidence="4">Gene product 20</fullName>
        <shortName>gp20</shortName>
    </alternativeName>
</protein>
<reference key="1">
    <citation type="journal article" date="2007" name="Virology">
        <title>The genome of epsilon15, a serotype-converting, Group E1 Salmonella enterica-specific bacteriophage.</title>
        <authorList>
            <person name="Kropinski A.M."/>
            <person name="Kovalyova I.V."/>
            <person name="Billington S.J."/>
            <person name="Patrick A.N."/>
            <person name="Butts B.D."/>
            <person name="Guichard J.A."/>
            <person name="Pitcher T.J."/>
            <person name="Guthrie C.C."/>
            <person name="Sydlaske A.D."/>
            <person name="Barnhill L.M."/>
            <person name="Havens K.A."/>
            <person name="Day K.R."/>
            <person name="Falk D.R."/>
            <person name="McConnell M.R."/>
        </authorList>
    </citation>
    <scope>NUCLEOTIDE SEQUENCE [GENOMIC DNA]</scope>
</reference>
<reference key="2">
    <citation type="journal article" date="1973" name="Virology">
        <title>In vitro interaction between phage and receptor lipopolysaccharide: a novel glycosidase associated with Salmonella phage 15.</title>
        <authorList>
            <person name="Takeda K."/>
            <person name="Uetake H."/>
        </authorList>
    </citation>
    <scope>FUNCTION</scope>
</reference>
<reference key="3">
    <citation type="journal article" date="2006" name="Nature">
        <title>Structure of epsilon15 bacteriophage reveals genome organization and DNA packaging/injection apparatus.</title>
        <authorList>
            <person name="Jiang W."/>
            <person name="Chang J."/>
            <person name="Jakana J."/>
            <person name="Weigele P."/>
            <person name="King J."/>
            <person name="Chiu W."/>
        </authorList>
    </citation>
    <scope>STRUCTURE BY ELECTRON MICROSCOPY (9.5 ANGSTROMS) OF THE VIRAL PARTICLE</scope>
    <scope>FUNCTION</scope>
    <scope>SUBCELLULAR LOCATION</scope>
</reference>
<reference key="4">
    <citation type="journal article" date="2010" name="J. Mol. Biol.">
        <title>Visualizing the structural changes of bacteriophage Epsilon15 and its Salmonella host during infection.</title>
        <authorList>
            <person name="Chang J.T."/>
            <person name="Schmid M.F."/>
            <person name="Haase-Pettingell C."/>
            <person name="Weigele P.R."/>
            <person name="King J.A."/>
            <person name="Chiu W."/>
        </authorList>
    </citation>
    <scope>FUNCTION</scope>
</reference>
<dbReference type="EC" id="3.2.1.-"/>
<dbReference type="EMBL" id="AY150271">
    <property type="protein sequence ID" value="AAO06083.1"/>
    <property type="molecule type" value="Genomic_DNA"/>
</dbReference>
<dbReference type="RefSeq" id="NP_848228.1">
    <property type="nucleotide sequence ID" value="NC_004775.2"/>
</dbReference>
<dbReference type="SMR" id="Q858F5"/>
<dbReference type="GeneID" id="2641857"/>
<dbReference type="KEGG" id="vg:2641857"/>
<dbReference type="OrthoDB" id="3941at10239"/>
<dbReference type="Proteomes" id="UP000001770">
    <property type="component" value="Genome"/>
</dbReference>
<dbReference type="GO" id="GO:0098024">
    <property type="term" value="C:virus tail, fiber"/>
    <property type="evidence" value="ECO:0000314"/>
    <property type="project" value="UniProtKB"/>
</dbReference>
<dbReference type="GO" id="GO:0004553">
    <property type="term" value="F:hydrolase activity, hydrolyzing O-glycosyl compounds"/>
    <property type="evidence" value="ECO:0000314"/>
    <property type="project" value="UniProtKB"/>
</dbReference>
<dbReference type="GO" id="GO:0098671">
    <property type="term" value="P:adhesion receptor-mediated virion attachment to host cell"/>
    <property type="evidence" value="ECO:0007669"/>
    <property type="project" value="UniProtKB-KW"/>
</dbReference>
<dbReference type="GO" id="GO:0044409">
    <property type="term" value="P:symbiont entry into host"/>
    <property type="evidence" value="ECO:0000314"/>
    <property type="project" value="UniProtKB"/>
</dbReference>
<dbReference type="GO" id="GO:0098994">
    <property type="term" value="P:symbiont entry into host cell via disruption of host cell envelope"/>
    <property type="evidence" value="ECO:0007669"/>
    <property type="project" value="UniProtKB-KW"/>
</dbReference>
<dbReference type="GO" id="GO:0098995">
    <property type="term" value="P:symbiont entry into host cell via disruption of host cell envelope lipopolysaccharide"/>
    <property type="evidence" value="ECO:0007669"/>
    <property type="project" value="UniProtKB-KW"/>
</dbReference>
<dbReference type="GO" id="GO:0019062">
    <property type="term" value="P:virion attachment to host cell"/>
    <property type="evidence" value="ECO:0000314"/>
    <property type="project" value="UniProtKB"/>
</dbReference>
<dbReference type="Gene3D" id="2.160.20.10">
    <property type="entry name" value="Single-stranded right-handed beta-helix, Pectin lyase-like"/>
    <property type="match status" value="1"/>
</dbReference>
<dbReference type="InterPro" id="IPR006626">
    <property type="entry name" value="PbH1"/>
</dbReference>
<dbReference type="InterPro" id="IPR012334">
    <property type="entry name" value="Pectin_lyas_fold"/>
</dbReference>
<dbReference type="InterPro" id="IPR011050">
    <property type="entry name" value="Pectin_lyase_fold/virulence"/>
</dbReference>
<dbReference type="SMART" id="SM00710">
    <property type="entry name" value="PbH1"/>
    <property type="match status" value="5"/>
</dbReference>
<dbReference type="SUPFAM" id="SSF51126">
    <property type="entry name" value="Pectin lyase-like"/>
    <property type="match status" value="1"/>
</dbReference>
<organism evidence="5">
    <name type="scientific">Salmonella phage epsilon15</name>
    <dbReference type="NCBI Taxonomy" id="215158"/>
    <lineage>
        <taxon>Viruses</taxon>
        <taxon>Duplodnaviria</taxon>
        <taxon>Heunggongvirae</taxon>
        <taxon>Uroviricota</taxon>
        <taxon>Caudoviricetes</taxon>
        <taxon>Uetakevirus</taxon>
        <taxon>Uetakevirus epsilon15</taxon>
    </lineage>
</organism>
<organismHost>
    <name type="scientific">Salmonella anatum</name>
    <dbReference type="NCBI Taxonomy" id="58712"/>
</organismHost>
<accession>Q858F5</accession>
<evidence type="ECO:0000269" key="1">
    <source>
    </source>
</evidence>
<evidence type="ECO:0000269" key="2">
    <source>
    </source>
</evidence>
<evidence type="ECO:0000269" key="3">
    <source>
    </source>
</evidence>
<evidence type="ECO:0000305" key="4"/>
<evidence type="ECO:0000312" key="5">
    <source>
        <dbReference type="Proteomes" id="UP000001770"/>
    </source>
</evidence>
<feature type="chain" id="PRO_0000432954" description="Tail spike protein">
    <location>
        <begin position="1"/>
        <end position="1070"/>
    </location>
</feature>
<proteinExistence type="evidence at protein level"/>
<sequence>MTVSTEVDHNDYTGNGVTTSFPYTFRIFKKSDLVVQVVDLNENITELILDTDYTVTGAGGYTCGDVVLSSPLANGYQISISRELPVTQETDLRNQGKFFAEVHENAFDKLTMLIQQVRSWLSLALRKPSFVANYYDALGNYIRNLRDPSRPQDAATKNYVDNLSEGNNSYADNLFSRTLRVPEKINTLPSSLDRANKIPAFDSNGNAIVIIPQSGSASDVLIELAKPSGSGLVGFSHSNNYNPGMVGEKLQNVVYPTDAPFYAPTDGTSDATTALQSAITHCEGKNAVLCINKSFSVSDSLSISSPLCVFAMNEQCGIVSSAPAGHAAVIFNGDNICWNGGFIRGLNQPSSSTIRQDGVLLNGNDCVLDNVSINGFFAKGLHTSNADGSGVGIRDYGTRNTISKCRVEYNKFGISLEGKDGWVLGNYVSNHYRMSSEAKPWDDTSNYWDGIVGGGEWLGVATGYLIDGNEFEDNGQSGIYAGGNGGIFAKNRITNNHIHGNWNRGIDFGVVQRLANSDVYENIITDNIVHNNRAANIWLAGVRDSIINNNNSWFTDDYRSMFAGNFDACVCLTLADGGEKAAPTGNQVNGNRCKTLESDDQISGFTLNITDTARGNQVRDNVLSPIGEAYIPNPELYAVNNIDIPTEFAFTPQLIGGSGVTLGNSSGKLTANGNVFSLSLSISAQSVSSPSGSLTIGYIPGLSGTSVRHHNVRTEFYNNLNTTMQRAQPYVNIGDSADQLRVYRLADGLSKDDLLEYFMSNSDLRMVGDIEIEPYNFSRSVTVVGHSFCTSDVMSTELNRLLGTDIYNFARGGASDVEVAMSQEAITRQYAPVGGSIPASGSVALTPTEVGIFWNGATGKCIFGGIDGTFSTTLVNAGTGETQLVFTRDSAGSAVSVSTTATFAMRPYTRFNTNTIPAGRKHSLHRDDIYIVWGGRNSTDYTRYVSELHTMVANMHTQRFVICPEFPYDTETTGTTGATNLAALNNNLKADFPDNYCQISGVDLLQNFKSKYNPAYAGDVTDIANGITPRSLREDNLHPSETLQPNGLYIGAKVNADFIAQFIKSKGWGG</sequence>
<name>FIBER_BPE15</name>